<protein>
    <recommendedName>
        <fullName>Uncharacterized HTH-type transcriptional regulator Mb0790c</fullName>
    </recommendedName>
</protein>
<dbReference type="EMBL" id="LT708304">
    <property type="protein sequence ID" value="SIT99389.1"/>
    <property type="molecule type" value="Genomic_DNA"/>
</dbReference>
<dbReference type="RefSeq" id="NP_854448.1">
    <property type="nucleotide sequence ID" value="NC_002945.3"/>
</dbReference>
<dbReference type="RefSeq" id="WP_003403915.1">
    <property type="nucleotide sequence ID" value="NC_002945.4"/>
</dbReference>
<dbReference type="SMR" id="P67433"/>
<dbReference type="KEGG" id="mbo:BQ2027_MB0790C"/>
<dbReference type="PATRIC" id="fig|233413.5.peg.860"/>
<dbReference type="Proteomes" id="UP000001419">
    <property type="component" value="Chromosome"/>
</dbReference>
<dbReference type="GO" id="GO:0003700">
    <property type="term" value="F:DNA-binding transcription factor activity"/>
    <property type="evidence" value="ECO:0007669"/>
    <property type="project" value="TreeGrafter"/>
</dbReference>
<dbReference type="GO" id="GO:0000976">
    <property type="term" value="F:transcription cis-regulatory region binding"/>
    <property type="evidence" value="ECO:0007669"/>
    <property type="project" value="TreeGrafter"/>
</dbReference>
<dbReference type="Gene3D" id="1.10.357.10">
    <property type="entry name" value="Tetracycline Repressor, domain 2"/>
    <property type="match status" value="1"/>
</dbReference>
<dbReference type="InterPro" id="IPR023772">
    <property type="entry name" value="DNA-bd_HTH_TetR-type_CS"/>
</dbReference>
<dbReference type="InterPro" id="IPR009057">
    <property type="entry name" value="Homeodomain-like_sf"/>
</dbReference>
<dbReference type="InterPro" id="IPR050109">
    <property type="entry name" value="HTH-type_TetR-like_transc_reg"/>
</dbReference>
<dbReference type="InterPro" id="IPR001647">
    <property type="entry name" value="HTH_TetR"/>
</dbReference>
<dbReference type="PANTHER" id="PTHR30055:SF234">
    <property type="entry name" value="HTH-TYPE TRANSCRIPTIONAL REGULATOR BETI"/>
    <property type="match status" value="1"/>
</dbReference>
<dbReference type="PANTHER" id="PTHR30055">
    <property type="entry name" value="HTH-TYPE TRANSCRIPTIONAL REGULATOR RUTR"/>
    <property type="match status" value="1"/>
</dbReference>
<dbReference type="Pfam" id="PF00440">
    <property type="entry name" value="TetR_N"/>
    <property type="match status" value="1"/>
</dbReference>
<dbReference type="PRINTS" id="PR00455">
    <property type="entry name" value="HTHTETR"/>
</dbReference>
<dbReference type="SUPFAM" id="SSF46689">
    <property type="entry name" value="Homeodomain-like"/>
    <property type="match status" value="1"/>
</dbReference>
<dbReference type="PROSITE" id="PS01081">
    <property type="entry name" value="HTH_TETR_1"/>
    <property type="match status" value="1"/>
</dbReference>
<dbReference type="PROSITE" id="PS50977">
    <property type="entry name" value="HTH_TETR_2"/>
    <property type="match status" value="1"/>
</dbReference>
<evidence type="ECO:0000255" key="1">
    <source>
        <dbReference type="PROSITE-ProRule" id="PRU00335"/>
    </source>
</evidence>
<evidence type="ECO:0000256" key="2">
    <source>
        <dbReference type="SAM" id="MobiDB-lite"/>
    </source>
</evidence>
<proteinExistence type="predicted"/>
<sequence>MSSDVLVTTPAQRQTEPHAEAVSRNRRQQATFRKVLAAAMATLREKSYADLTVRLVAARAKVAPATAYTYFSSKNHLIAEVYLDLVRQVPCVTDVNVPMPIRVTSSLRHLALVVADEPEIGAACTAALLDGGADPAVRAVRDRIGAEIHRRITSAIGPGADPGTVFALEMAFFGALVQAGSGTFTYHEIADRLGYVVGLILAGANEPSTGGSE</sequence>
<organism>
    <name type="scientific">Mycobacterium bovis (strain ATCC BAA-935 / AF2122/97)</name>
    <dbReference type="NCBI Taxonomy" id="233413"/>
    <lineage>
        <taxon>Bacteria</taxon>
        <taxon>Bacillati</taxon>
        <taxon>Actinomycetota</taxon>
        <taxon>Actinomycetes</taxon>
        <taxon>Mycobacteriales</taxon>
        <taxon>Mycobacteriaceae</taxon>
        <taxon>Mycobacterium</taxon>
        <taxon>Mycobacterium tuberculosis complex</taxon>
    </lineage>
</organism>
<accession>P67433</accession>
<accession>A0A1R3XWE4</accession>
<accession>P71822</accession>
<accession>X2BG56</accession>
<gene>
    <name type="ordered locus">BQ2027_MB0790C</name>
</gene>
<keyword id="KW-0238">DNA-binding</keyword>
<keyword id="KW-1185">Reference proteome</keyword>
<keyword id="KW-0677">Repeat</keyword>
<keyword id="KW-0804">Transcription</keyword>
<keyword id="KW-0805">Transcription regulation</keyword>
<name>Y790_MYCBO</name>
<reference key="1">
    <citation type="journal article" date="2003" name="Proc. Natl. Acad. Sci. U.S.A.">
        <title>The complete genome sequence of Mycobacterium bovis.</title>
        <authorList>
            <person name="Garnier T."/>
            <person name="Eiglmeier K."/>
            <person name="Camus J.-C."/>
            <person name="Medina N."/>
            <person name="Mansoor H."/>
            <person name="Pryor M."/>
            <person name="Duthoy S."/>
            <person name="Grondin S."/>
            <person name="Lacroix C."/>
            <person name="Monsempe C."/>
            <person name="Simon S."/>
            <person name="Harris B."/>
            <person name="Atkin R."/>
            <person name="Doggett J."/>
            <person name="Mayes R."/>
            <person name="Keating L."/>
            <person name="Wheeler P.R."/>
            <person name="Parkhill J."/>
            <person name="Barrell B.G."/>
            <person name="Cole S.T."/>
            <person name="Gordon S.V."/>
            <person name="Hewinson R.G."/>
        </authorList>
    </citation>
    <scope>NUCLEOTIDE SEQUENCE [LARGE SCALE GENOMIC DNA]</scope>
    <source>
        <strain>ATCC BAA-935 / AF2122/97</strain>
    </source>
</reference>
<reference key="2">
    <citation type="journal article" date="2017" name="Genome Announc.">
        <title>Updated reference genome sequence and annotation of Mycobacterium bovis AF2122/97.</title>
        <authorList>
            <person name="Malone K.M."/>
            <person name="Farrell D."/>
            <person name="Stuber T.P."/>
            <person name="Schubert O.T."/>
            <person name="Aebersold R."/>
            <person name="Robbe-Austerman S."/>
            <person name="Gordon S.V."/>
        </authorList>
    </citation>
    <scope>NUCLEOTIDE SEQUENCE [LARGE SCALE GENOMIC DNA]</scope>
    <scope>GENOME REANNOTATION</scope>
    <source>
        <strain>ATCC BAA-935 / AF2122/97</strain>
    </source>
</reference>
<feature type="chain" id="PRO_0000070658" description="Uncharacterized HTH-type transcriptional regulator Mb0790c">
    <location>
        <begin position="1"/>
        <end position="213"/>
    </location>
</feature>
<feature type="domain" description="HTH tetR-type" evidence="1">
    <location>
        <begin position="29"/>
        <end position="89"/>
    </location>
</feature>
<feature type="region of interest" description="Disordered" evidence="2">
    <location>
        <begin position="1"/>
        <end position="26"/>
    </location>
</feature>
<feature type="compositionally biased region" description="Polar residues" evidence="2">
    <location>
        <begin position="1"/>
        <end position="14"/>
    </location>
</feature>